<proteinExistence type="evidence at protein level"/>
<dbReference type="GO" id="GO:0005576">
    <property type="term" value="C:extracellular region"/>
    <property type="evidence" value="ECO:0007005"/>
    <property type="project" value="UniProtKB"/>
</dbReference>
<dbReference type="GO" id="GO:0007218">
    <property type="term" value="P:neuropeptide signaling pathway"/>
    <property type="evidence" value="ECO:0007669"/>
    <property type="project" value="UniProtKB-KW"/>
</dbReference>
<organism>
    <name type="scientific">Acrosternum hilare</name>
    <name type="common">Green stink bug</name>
    <name type="synonym">Nezara hilaris</name>
    <dbReference type="NCBI Taxonomy" id="244443"/>
    <lineage>
        <taxon>Eukaryota</taxon>
        <taxon>Metazoa</taxon>
        <taxon>Ecdysozoa</taxon>
        <taxon>Arthropoda</taxon>
        <taxon>Hexapoda</taxon>
        <taxon>Insecta</taxon>
        <taxon>Pterygota</taxon>
        <taxon>Neoptera</taxon>
        <taxon>Paraneoptera</taxon>
        <taxon>Hemiptera</taxon>
        <taxon>Heteroptera</taxon>
        <taxon>Panheteroptera</taxon>
        <taxon>Pentatomomorpha</taxon>
        <taxon>Pentatomoidea</taxon>
        <taxon>Pentatomidae</taxon>
        <taxon>Pentatominae</taxon>
        <taxon>Acrosternum</taxon>
    </lineage>
</organism>
<accession>P86559</accession>
<name>TRP3_ACRHI</name>
<comment type="subcellular location">
    <subcellularLocation>
        <location evidence="1 3">Secreted</location>
    </subcellularLocation>
</comment>
<comment type="tissue specificity">
    <text evidence="1">Expressed in the antennal lobe (at protein level).</text>
</comment>
<reference evidence="3" key="1">
    <citation type="journal article" date="2009" name="Peptides">
        <title>Neuropeptides in Heteroptera: identification of allatotropin-related peptide and tachykinin-related peptides using MALDI-TOF mass spectrometry.</title>
        <authorList>
            <person name="Neupert S."/>
            <person name="Russell W.K."/>
            <person name="Russell D.H."/>
            <person name="Lopez J.D. Jr."/>
            <person name="Predel R."/>
            <person name="Nachman R.J."/>
        </authorList>
    </citation>
    <scope>PROTEIN SEQUENCE</scope>
    <scope>SUBCELLULAR LOCATION</scope>
    <scope>TISSUE SPECIFICITY</scope>
    <scope>AMIDATION AT ARG-10</scope>
    <source>
        <tissue evidence="1">Antennal lobe</tissue>
    </source>
</reference>
<keyword id="KW-0027">Amidation</keyword>
<keyword id="KW-0903">Direct protein sequencing</keyword>
<keyword id="KW-0527">Neuropeptide</keyword>
<keyword id="KW-0964">Secreted</keyword>
<protein>
    <recommendedName>
        <fullName evidence="2">Tachykinin-related peptide 3</fullName>
        <shortName evidence="2">TKRP-3</shortName>
    </recommendedName>
</protein>
<evidence type="ECO:0000269" key="1">
    <source>
    </source>
</evidence>
<evidence type="ECO:0000303" key="2">
    <source>
    </source>
</evidence>
<evidence type="ECO:0000305" key="3"/>
<feature type="peptide" id="PRO_0000395628" description="Tachykinin-related peptide 3" evidence="1">
    <location>
        <begin position="1"/>
        <end position="10"/>
    </location>
</feature>
<feature type="modified residue" description="Arginine amide" evidence="1">
    <location>
        <position position="10"/>
    </location>
</feature>
<sequence>GPSSGFFGMR</sequence>